<keyword id="KW-0030">Aminoacyl-tRNA synthetase</keyword>
<keyword id="KW-0067">ATP-binding</keyword>
<keyword id="KW-0963">Cytoplasm</keyword>
<keyword id="KW-0436">Ligase</keyword>
<keyword id="KW-0460">Magnesium</keyword>
<keyword id="KW-0479">Metal-binding</keyword>
<keyword id="KW-0547">Nucleotide-binding</keyword>
<keyword id="KW-0648">Protein biosynthesis</keyword>
<keyword id="KW-1185">Reference proteome</keyword>
<keyword id="KW-0694">RNA-binding</keyword>
<keyword id="KW-0820">tRNA-binding</keyword>
<gene>
    <name evidence="1" type="primary">pheT</name>
    <name type="ordered locus">Plut_0711</name>
</gene>
<sequence length="804" mass="86445">MKISVNWLKDFLPSFSPDITSLVEKLTFLGLEVEDVESTPLPDLRVVVGRVQSVALHPDADRLRICMVDTGLEEPLQIVCGAPNVAEGMLVPVATEGSRLTMQDGTSFVIKPSKIRGQRSFGMICAADELGLSADHSGVMELDSSYAVGEPFARYLDSDTVLDIAVTPNRPDVLSHLGIARELGSAPDAILFPEEAPLEFSADSPLVQVMDSGACPLYVGVIIRGVTVGPSPRWLSARLESIGLRPKNNIVDITNFILHALGQPLHAFDLQKLKGGRVIVRSDFSGSFTTLGAEQCTVEPGMPVICDTQMPVALAGVMGGLDSAVGEGTVDILLEAACFAPSAVRRSARKAGISSDSSYRFERGIDIRNVLPAARAAVALILETAGGTVGEATLQGDPSPALLVLPFRPRRANELLGTAIETDAMQAMLARIGFRTLALDEGVMQVEVPSCRIDVLQEIDLIEEVARLHGYDNIEASGRLAATYPASRTRPGYFPDFLRGVAVGLDFREVLTNPLIRREEAAPFGDGLVSVLNPISEGLEVLRPGLVPGMLKVIAHNIRHGNRDMRLFEVAHGFSVADPSGAAEQGPLGAYCEKEWLVLALTGNRYPRSWNQPPDRVDFYDAVGAAEMLLGKLNLLDKSAVNIYNENTVSIDLELTEGKKKRSQRAGRAMRLDSALLSQFGIEQDVFTVELDVSVLEMLYSPDVVYDPPSKFPAVQRDLSFILPGTVPVQSLVGLVRSSDPLIRDVSVFDVFERGSGGGGERSVGLSISIADHSGTLQEGRISEILRTVGVNAESKLGAVIRQV</sequence>
<protein>
    <recommendedName>
        <fullName evidence="1">Phenylalanine--tRNA ligase beta subunit</fullName>
        <ecNumber evidence="1">6.1.1.20</ecNumber>
    </recommendedName>
    <alternativeName>
        <fullName evidence="1">Phenylalanyl-tRNA synthetase beta subunit</fullName>
        <shortName evidence="1">PheRS</shortName>
    </alternativeName>
</protein>
<proteinExistence type="inferred from homology"/>
<name>SYFB_CHLL3</name>
<evidence type="ECO:0000255" key="1">
    <source>
        <dbReference type="HAMAP-Rule" id="MF_00283"/>
    </source>
</evidence>
<feature type="chain" id="PRO_0000232073" description="Phenylalanine--tRNA ligase beta subunit">
    <location>
        <begin position="1"/>
        <end position="804"/>
    </location>
</feature>
<feature type="domain" description="tRNA-binding" evidence="1">
    <location>
        <begin position="40"/>
        <end position="153"/>
    </location>
</feature>
<feature type="domain" description="B5" evidence="1">
    <location>
        <begin position="400"/>
        <end position="476"/>
    </location>
</feature>
<feature type="domain" description="FDX-ACB" evidence="1">
    <location>
        <begin position="710"/>
        <end position="802"/>
    </location>
</feature>
<feature type="binding site" evidence="1">
    <location>
        <position position="454"/>
    </location>
    <ligand>
        <name>Mg(2+)</name>
        <dbReference type="ChEBI" id="CHEBI:18420"/>
        <note>shared with alpha subunit</note>
    </ligand>
</feature>
<feature type="binding site" evidence="1">
    <location>
        <position position="460"/>
    </location>
    <ligand>
        <name>Mg(2+)</name>
        <dbReference type="ChEBI" id="CHEBI:18420"/>
        <note>shared with alpha subunit</note>
    </ligand>
</feature>
<feature type="binding site" evidence="1">
    <location>
        <position position="463"/>
    </location>
    <ligand>
        <name>Mg(2+)</name>
        <dbReference type="ChEBI" id="CHEBI:18420"/>
        <note>shared with alpha subunit</note>
    </ligand>
</feature>
<feature type="binding site" evidence="1">
    <location>
        <position position="464"/>
    </location>
    <ligand>
        <name>Mg(2+)</name>
        <dbReference type="ChEBI" id="CHEBI:18420"/>
        <note>shared with alpha subunit</note>
    </ligand>
</feature>
<organism>
    <name type="scientific">Chlorobium luteolum (strain DSM 273 / BCRC 81028 / 2530)</name>
    <name type="common">Pelodictyon luteolum</name>
    <dbReference type="NCBI Taxonomy" id="319225"/>
    <lineage>
        <taxon>Bacteria</taxon>
        <taxon>Pseudomonadati</taxon>
        <taxon>Chlorobiota</taxon>
        <taxon>Chlorobiia</taxon>
        <taxon>Chlorobiales</taxon>
        <taxon>Chlorobiaceae</taxon>
        <taxon>Chlorobium/Pelodictyon group</taxon>
        <taxon>Pelodictyon</taxon>
    </lineage>
</organism>
<reference key="1">
    <citation type="submission" date="2005-08" db="EMBL/GenBank/DDBJ databases">
        <title>Complete sequence of Pelodictyon luteolum DSM 273.</title>
        <authorList>
            <consortium name="US DOE Joint Genome Institute"/>
            <person name="Copeland A."/>
            <person name="Lucas S."/>
            <person name="Lapidus A."/>
            <person name="Barry K."/>
            <person name="Detter J.C."/>
            <person name="Glavina T."/>
            <person name="Hammon N."/>
            <person name="Israni S."/>
            <person name="Pitluck S."/>
            <person name="Bryant D."/>
            <person name="Schmutz J."/>
            <person name="Larimer F."/>
            <person name="Land M."/>
            <person name="Kyrpides N."/>
            <person name="Ivanova N."/>
            <person name="Richardson P."/>
        </authorList>
    </citation>
    <scope>NUCLEOTIDE SEQUENCE [LARGE SCALE GENOMIC DNA]</scope>
    <source>
        <strain>DSM 273 / BCRC 81028 / 2530</strain>
    </source>
</reference>
<accession>Q3B4Z2</accession>
<comment type="catalytic activity">
    <reaction evidence="1">
        <text>tRNA(Phe) + L-phenylalanine + ATP = L-phenylalanyl-tRNA(Phe) + AMP + diphosphate + H(+)</text>
        <dbReference type="Rhea" id="RHEA:19413"/>
        <dbReference type="Rhea" id="RHEA-COMP:9668"/>
        <dbReference type="Rhea" id="RHEA-COMP:9699"/>
        <dbReference type="ChEBI" id="CHEBI:15378"/>
        <dbReference type="ChEBI" id="CHEBI:30616"/>
        <dbReference type="ChEBI" id="CHEBI:33019"/>
        <dbReference type="ChEBI" id="CHEBI:58095"/>
        <dbReference type="ChEBI" id="CHEBI:78442"/>
        <dbReference type="ChEBI" id="CHEBI:78531"/>
        <dbReference type="ChEBI" id="CHEBI:456215"/>
        <dbReference type="EC" id="6.1.1.20"/>
    </reaction>
</comment>
<comment type="cofactor">
    <cofactor evidence="1">
        <name>Mg(2+)</name>
        <dbReference type="ChEBI" id="CHEBI:18420"/>
    </cofactor>
    <text evidence="1">Binds 2 magnesium ions per tetramer.</text>
</comment>
<comment type="subunit">
    <text evidence="1">Tetramer of two alpha and two beta subunits.</text>
</comment>
<comment type="subcellular location">
    <subcellularLocation>
        <location evidence="1">Cytoplasm</location>
    </subcellularLocation>
</comment>
<comment type="similarity">
    <text evidence="1">Belongs to the phenylalanyl-tRNA synthetase beta subunit family. Type 1 subfamily.</text>
</comment>
<dbReference type="EC" id="6.1.1.20" evidence="1"/>
<dbReference type="EMBL" id="CP000096">
    <property type="protein sequence ID" value="ABB23589.1"/>
    <property type="molecule type" value="Genomic_DNA"/>
</dbReference>
<dbReference type="RefSeq" id="WP_011357463.1">
    <property type="nucleotide sequence ID" value="NC_007512.1"/>
</dbReference>
<dbReference type="SMR" id="Q3B4Z2"/>
<dbReference type="STRING" id="319225.Plut_0711"/>
<dbReference type="KEGG" id="plt:Plut_0711"/>
<dbReference type="eggNOG" id="COG0072">
    <property type="taxonomic scope" value="Bacteria"/>
</dbReference>
<dbReference type="eggNOG" id="COG0073">
    <property type="taxonomic scope" value="Bacteria"/>
</dbReference>
<dbReference type="HOGENOM" id="CLU_016891_0_0_10"/>
<dbReference type="OrthoDB" id="9805455at2"/>
<dbReference type="Proteomes" id="UP000002709">
    <property type="component" value="Chromosome"/>
</dbReference>
<dbReference type="GO" id="GO:0009328">
    <property type="term" value="C:phenylalanine-tRNA ligase complex"/>
    <property type="evidence" value="ECO:0007669"/>
    <property type="project" value="TreeGrafter"/>
</dbReference>
<dbReference type="GO" id="GO:0005524">
    <property type="term" value="F:ATP binding"/>
    <property type="evidence" value="ECO:0007669"/>
    <property type="project" value="UniProtKB-UniRule"/>
</dbReference>
<dbReference type="GO" id="GO:0000287">
    <property type="term" value="F:magnesium ion binding"/>
    <property type="evidence" value="ECO:0007669"/>
    <property type="project" value="UniProtKB-UniRule"/>
</dbReference>
<dbReference type="GO" id="GO:0004826">
    <property type="term" value="F:phenylalanine-tRNA ligase activity"/>
    <property type="evidence" value="ECO:0007669"/>
    <property type="project" value="UniProtKB-UniRule"/>
</dbReference>
<dbReference type="GO" id="GO:0000049">
    <property type="term" value="F:tRNA binding"/>
    <property type="evidence" value="ECO:0007669"/>
    <property type="project" value="UniProtKB-KW"/>
</dbReference>
<dbReference type="GO" id="GO:0006432">
    <property type="term" value="P:phenylalanyl-tRNA aminoacylation"/>
    <property type="evidence" value="ECO:0007669"/>
    <property type="project" value="UniProtKB-UniRule"/>
</dbReference>
<dbReference type="CDD" id="cd02796">
    <property type="entry name" value="tRNA_bind_bactPheRS"/>
    <property type="match status" value="1"/>
</dbReference>
<dbReference type="FunFam" id="2.40.50.140:FF:000045">
    <property type="entry name" value="Phenylalanine--tRNA ligase beta subunit"/>
    <property type="match status" value="1"/>
</dbReference>
<dbReference type="Gene3D" id="3.30.56.10">
    <property type="match status" value="2"/>
</dbReference>
<dbReference type="Gene3D" id="3.30.930.10">
    <property type="entry name" value="Bira Bifunctional Protein, Domain 2"/>
    <property type="match status" value="1"/>
</dbReference>
<dbReference type="Gene3D" id="3.30.70.380">
    <property type="entry name" value="Ferrodoxin-fold anticodon-binding domain"/>
    <property type="match status" value="1"/>
</dbReference>
<dbReference type="Gene3D" id="2.40.50.140">
    <property type="entry name" value="Nucleic acid-binding proteins"/>
    <property type="match status" value="1"/>
</dbReference>
<dbReference type="Gene3D" id="3.50.40.10">
    <property type="entry name" value="Phenylalanyl-trna Synthetase, Chain B, domain 3"/>
    <property type="match status" value="1"/>
</dbReference>
<dbReference type="HAMAP" id="MF_00283">
    <property type="entry name" value="Phe_tRNA_synth_beta1"/>
    <property type="match status" value="1"/>
</dbReference>
<dbReference type="InterPro" id="IPR045864">
    <property type="entry name" value="aa-tRNA-synth_II/BPL/LPL"/>
</dbReference>
<dbReference type="InterPro" id="IPR005146">
    <property type="entry name" value="B3/B4_tRNA-bd"/>
</dbReference>
<dbReference type="InterPro" id="IPR009061">
    <property type="entry name" value="DNA-bd_dom_put_sf"/>
</dbReference>
<dbReference type="InterPro" id="IPR005121">
    <property type="entry name" value="Fdx_antiC-bd"/>
</dbReference>
<dbReference type="InterPro" id="IPR036690">
    <property type="entry name" value="Fdx_antiC-bd_sf"/>
</dbReference>
<dbReference type="InterPro" id="IPR012340">
    <property type="entry name" value="NA-bd_OB-fold"/>
</dbReference>
<dbReference type="InterPro" id="IPR045060">
    <property type="entry name" value="Phe-tRNA-ligase_IIc_bsu"/>
</dbReference>
<dbReference type="InterPro" id="IPR004532">
    <property type="entry name" value="Phe-tRNA-ligase_IIc_bsu_bact"/>
</dbReference>
<dbReference type="InterPro" id="IPR020825">
    <property type="entry name" value="Phe-tRNA_synthase-like_B3/B4"/>
</dbReference>
<dbReference type="InterPro" id="IPR041616">
    <property type="entry name" value="PheRS_beta_core"/>
</dbReference>
<dbReference type="InterPro" id="IPR002547">
    <property type="entry name" value="tRNA-bd_dom"/>
</dbReference>
<dbReference type="InterPro" id="IPR033714">
    <property type="entry name" value="tRNA_bind_bactPheRS"/>
</dbReference>
<dbReference type="InterPro" id="IPR005147">
    <property type="entry name" value="tRNA_synthase_B5-dom"/>
</dbReference>
<dbReference type="NCBIfam" id="TIGR00472">
    <property type="entry name" value="pheT_bact"/>
    <property type="match status" value="1"/>
</dbReference>
<dbReference type="NCBIfam" id="NF045760">
    <property type="entry name" value="YtpR"/>
    <property type="match status" value="1"/>
</dbReference>
<dbReference type="PANTHER" id="PTHR10947:SF0">
    <property type="entry name" value="PHENYLALANINE--TRNA LIGASE BETA SUBUNIT"/>
    <property type="match status" value="1"/>
</dbReference>
<dbReference type="PANTHER" id="PTHR10947">
    <property type="entry name" value="PHENYLALANYL-TRNA SYNTHETASE BETA CHAIN AND LEUCINE-RICH REPEAT-CONTAINING PROTEIN 47"/>
    <property type="match status" value="1"/>
</dbReference>
<dbReference type="Pfam" id="PF03483">
    <property type="entry name" value="B3_4"/>
    <property type="match status" value="1"/>
</dbReference>
<dbReference type="Pfam" id="PF03484">
    <property type="entry name" value="B5"/>
    <property type="match status" value="1"/>
</dbReference>
<dbReference type="Pfam" id="PF03147">
    <property type="entry name" value="FDX-ACB"/>
    <property type="match status" value="1"/>
</dbReference>
<dbReference type="Pfam" id="PF01588">
    <property type="entry name" value="tRNA_bind"/>
    <property type="match status" value="1"/>
</dbReference>
<dbReference type="Pfam" id="PF17759">
    <property type="entry name" value="tRNA_synthFbeta"/>
    <property type="match status" value="1"/>
</dbReference>
<dbReference type="SMART" id="SM00873">
    <property type="entry name" value="B3_4"/>
    <property type="match status" value="1"/>
</dbReference>
<dbReference type="SMART" id="SM00874">
    <property type="entry name" value="B5"/>
    <property type="match status" value="1"/>
</dbReference>
<dbReference type="SMART" id="SM00896">
    <property type="entry name" value="FDX-ACB"/>
    <property type="match status" value="1"/>
</dbReference>
<dbReference type="SUPFAM" id="SSF54991">
    <property type="entry name" value="Anticodon-binding domain of PheRS"/>
    <property type="match status" value="1"/>
</dbReference>
<dbReference type="SUPFAM" id="SSF55681">
    <property type="entry name" value="Class II aaRS and biotin synthetases"/>
    <property type="match status" value="1"/>
</dbReference>
<dbReference type="SUPFAM" id="SSF50249">
    <property type="entry name" value="Nucleic acid-binding proteins"/>
    <property type="match status" value="1"/>
</dbReference>
<dbReference type="SUPFAM" id="SSF56037">
    <property type="entry name" value="PheT/TilS domain"/>
    <property type="match status" value="1"/>
</dbReference>
<dbReference type="SUPFAM" id="SSF46955">
    <property type="entry name" value="Putative DNA-binding domain"/>
    <property type="match status" value="1"/>
</dbReference>
<dbReference type="PROSITE" id="PS51483">
    <property type="entry name" value="B5"/>
    <property type="match status" value="1"/>
</dbReference>
<dbReference type="PROSITE" id="PS51447">
    <property type="entry name" value="FDX_ACB"/>
    <property type="match status" value="1"/>
</dbReference>
<dbReference type="PROSITE" id="PS50886">
    <property type="entry name" value="TRBD"/>
    <property type="match status" value="1"/>
</dbReference>